<evidence type="ECO:0000255" key="1">
    <source>
        <dbReference type="PROSITE-ProRule" id="PRU00355"/>
    </source>
</evidence>
<evidence type="ECO:0000255" key="2">
    <source>
        <dbReference type="PROSITE-ProRule" id="PRU00819"/>
    </source>
</evidence>
<evidence type="ECO:0000256" key="3">
    <source>
        <dbReference type="SAM" id="MobiDB-lite"/>
    </source>
</evidence>
<evidence type="ECO:0000269" key="4">
    <source>
    </source>
</evidence>
<evidence type="ECO:0000269" key="5">
    <source>
    </source>
</evidence>
<evidence type="ECO:0000269" key="6">
    <source>
    </source>
</evidence>
<evidence type="ECO:0000269" key="7">
    <source>
    </source>
</evidence>
<evidence type="ECO:0000269" key="8">
    <source>
    </source>
</evidence>
<evidence type="ECO:0000269" key="9">
    <source>
    </source>
</evidence>
<evidence type="ECO:0000303" key="10">
    <source>
    </source>
</evidence>
<evidence type="ECO:0000303" key="11">
    <source>
    </source>
</evidence>
<evidence type="ECO:0000305" key="12"/>
<evidence type="ECO:0000312" key="13">
    <source>
        <dbReference type="EMBL" id="AAF47037.3"/>
    </source>
</evidence>
<evidence type="ECO:0007829" key="14">
    <source>
        <dbReference type="PDB" id="1C20"/>
    </source>
</evidence>
<evidence type="ECO:0007829" key="15">
    <source>
        <dbReference type="PDB" id="1KQQ"/>
    </source>
</evidence>
<name>DRI_DROME</name>
<gene>
    <name type="primary">retn</name>
    <name type="synonym">dri</name>
    <name type="ORF">CG5403</name>
</gene>
<accession>Q24573</accession>
<accession>Q8MSB0</accession>
<accession>Q9W1M0</accession>
<sequence length="911" mass="97365">MQLRVHPTMDCSGRSTSNIERDSDLGDDLSHGDRTDDEMRDCDSVDGEHHQLSAKAAIAARLSHTVSGGGGSFASPEPQTELPLSHHHQLPPNHPLNALGSFMGIGGLHSIPNLQHSDVLEKLKMQVRDMKVGLMEQDYAAAAHAAAFGANMLPTTISSGFPLPHNSVAFGHVTSSPSGGNGSSYNGGTTPTNSSNSNATTNGGGTAGPGGTGGSGGGGGGGGGGGGGVGGHQFSFASPTAAPSGKEARHFAANSASNSSTSSEASNSSQQNNGWSFEEQFKQVRQLYEINDDPKRKEFLDDLFSFMQKRGTPINRLPIMAKSVLDLYELYNLVIARGGLVDVINKKLWQEIIKGLHLPSSITSAAFTLRTQYMKYLYPYECEKKNLSTPAELQAAIDGNRREGRRSSYGQYEAMHNQMPMTPISRPSLPGGMQQMSPLALVTHAAVANNQQAQAAAAAAAAHHRLMGAPAFGQMPNLVKQEIESRMMEYLQLIQAKKEQGMPPVLGGNHPHQQQHSQQQQQQQHHHQQQQQQQSQQQHHLQQQRQRSQSPDLSKHEALSAQVALWHMYHNNNSPPGSAHTSPQQREALNLSDSPPNLTNIKREREREPTPEPVDQDDKFVDQPPPAKRVGSGLLPPGFPANFYLNPHNMAAVAAAAGFHHPSMGHQQDAASEGEPEDDYAHGEHNTTGNSSSMHDDSEPQQMNGHHHHQTHHLDKSDDSAIENSPTTSTTTGGSVGHRHSSPVSTKKKGGAKPQSGGKDVPTEDKDASSSGKLNPLETLSLLSGMQFQVARNGTGDNGEPQLIVNLELNGVKYSGVLVANVPLSQSETRTSSPCHAEAPTVEEEKDEEEEEEPKAAEEESHRSPVKQENEDVDQDMEGSEVLLNGGASAVGGAGAGVGVGVPLLKDAVVS</sequence>
<feature type="chain" id="PRO_0000200583" description="Protein dead ringer">
    <location>
        <begin position="1"/>
        <end position="911"/>
    </location>
</feature>
<feature type="domain" description="ARID" evidence="1">
    <location>
        <begin position="293"/>
        <end position="385"/>
    </location>
</feature>
<feature type="domain" description="REKLES" evidence="2">
    <location>
        <begin position="731"/>
        <end position="825"/>
    </location>
</feature>
<feature type="region of interest" description="Disordered" evidence="3">
    <location>
        <begin position="1"/>
        <end position="44"/>
    </location>
</feature>
<feature type="region of interest" description="Disordered" evidence="3">
    <location>
        <begin position="67"/>
        <end position="87"/>
    </location>
</feature>
<feature type="region of interest" description="Disordered" evidence="3">
    <location>
        <begin position="172"/>
        <end position="274"/>
    </location>
</feature>
<feature type="region of interest" description="Disordered" evidence="3">
    <location>
        <begin position="501"/>
        <end position="633"/>
    </location>
</feature>
<feature type="region of interest" description="Disordered" evidence="3">
    <location>
        <begin position="662"/>
        <end position="775"/>
    </location>
</feature>
<feature type="region of interest" description="Disordered" evidence="3">
    <location>
        <begin position="826"/>
        <end position="877"/>
    </location>
</feature>
<feature type="compositionally biased region" description="Basic and acidic residues" evidence="3">
    <location>
        <begin position="19"/>
        <end position="34"/>
    </location>
</feature>
<feature type="compositionally biased region" description="Low complexity" evidence="3">
    <location>
        <begin position="174"/>
        <end position="201"/>
    </location>
</feature>
<feature type="compositionally biased region" description="Gly residues" evidence="3">
    <location>
        <begin position="202"/>
        <end position="231"/>
    </location>
</feature>
<feature type="compositionally biased region" description="Low complexity" evidence="3">
    <location>
        <begin position="252"/>
        <end position="273"/>
    </location>
</feature>
<feature type="compositionally biased region" description="Low complexity" evidence="3">
    <location>
        <begin position="512"/>
        <end position="550"/>
    </location>
</feature>
<feature type="compositionally biased region" description="Polar residues" evidence="3">
    <location>
        <begin position="570"/>
        <end position="600"/>
    </location>
</feature>
<feature type="compositionally biased region" description="Basic and acidic residues" evidence="3">
    <location>
        <begin position="601"/>
        <end position="621"/>
    </location>
</feature>
<feature type="compositionally biased region" description="Basic residues" evidence="3">
    <location>
        <begin position="737"/>
        <end position="751"/>
    </location>
</feature>
<feature type="compositionally biased region" description="Acidic residues" evidence="3">
    <location>
        <begin position="841"/>
        <end position="853"/>
    </location>
</feature>
<feature type="compositionally biased region" description="Basic and acidic residues" evidence="3">
    <location>
        <begin position="854"/>
        <end position="870"/>
    </location>
</feature>
<feature type="modified residue" description="Phosphoserine" evidence="8">
    <location>
        <position position="30"/>
    </location>
</feature>
<feature type="modified residue" description="Phosphothreonine" evidence="8">
    <location>
        <position position="35"/>
    </location>
</feature>
<feature type="modified residue" description="Phosphoserine" evidence="8">
    <location>
        <position position="44"/>
    </location>
</feature>
<feature type="modified residue" description="Phosphoserine" evidence="8">
    <location>
        <position position="592"/>
    </location>
</feature>
<feature type="modified residue" description="Phosphoserine" evidence="8">
    <location>
        <position position="594"/>
    </location>
</feature>
<feature type="modified residue" description="Phosphoserine" evidence="8">
    <location>
        <position position="720"/>
    </location>
</feature>
<feature type="splice variant" id="VSP_050694" description="In isoform A." evidence="10 11">
    <location>
        <begin position="248"/>
        <end position="252"/>
    </location>
</feature>
<feature type="sequence conflict" description="In Ref. 1; AAB05771." evidence="12" ref="1">
    <original>S</original>
    <variation>A</variation>
    <location>
        <position position="176"/>
    </location>
</feature>
<feature type="sequence conflict" description="In Ref. 1; AAB05771." evidence="12" ref="1">
    <original>G</original>
    <variation>GA</variation>
    <location>
        <position position="219"/>
    </location>
</feature>
<feature type="sequence conflict" description="In Ref. 1; AAB05771." evidence="12" ref="1">
    <location>
        <position position="524"/>
    </location>
</feature>
<feature type="sequence conflict" description="In Ref. 1; AAB05771." evidence="12" ref="1">
    <location>
        <position position="528"/>
    </location>
</feature>
<feature type="sequence conflict" description="In Ref. 1; AAB05771." evidence="12" ref="1">
    <original>V</original>
    <variation>L</variation>
    <location>
        <position position="761"/>
    </location>
</feature>
<feature type="sequence conflict" description="In Ref. 1; AAB05771." evidence="12" ref="1">
    <original>E</original>
    <variation>EEE</variation>
    <location>
        <position position="853"/>
    </location>
</feature>
<feature type="sequence conflict" description="In Ref. 1; AAB05771." evidence="12" ref="1">
    <original>V</original>
    <variation>A</variation>
    <location>
        <position position="873"/>
    </location>
</feature>
<feature type="sequence conflict" description="In Ref. 1; AAB05771." evidence="12" ref="1">
    <original>V</original>
    <variation>VGV</variation>
    <location>
        <position position="902"/>
    </location>
</feature>
<feature type="helix" evidence="14">
    <location>
        <begin position="277"/>
        <end position="289"/>
    </location>
</feature>
<feature type="helix" evidence="14">
    <location>
        <begin position="294"/>
        <end position="307"/>
    </location>
</feature>
<feature type="turn" evidence="14">
    <location>
        <begin position="308"/>
        <end position="310"/>
    </location>
</feature>
<feature type="strand" evidence="15">
    <location>
        <begin position="319"/>
        <end position="324"/>
    </location>
</feature>
<feature type="helix" evidence="14">
    <location>
        <begin position="327"/>
        <end position="336"/>
    </location>
</feature>
<feature type="helix" evidence="14">
    <location>
        <begin position="340"/>
        <end position="346"/>
    </location>
</feature>
<feature type="helix" evidence="14">
    <location>
        <begin position="349"/>
        <end position="355"/>
    </location>
</feature>
<feature type="helix" evidence="14">
    <location>
        <begin position="365"/>
        <end position="376"/>
    </location>
</feature>
<feature type="helix" evidence="14">
    <location>
        <begin position="378"/>
        <end position="385"/>
    </location>
</feature>
<feature type="helix" evidence="14">
    <location>
        <begin position="390"/>
        <end position="400"/>
    </location>
</feature>
<comment type="function">
    <text evidence="6 7">Transcription factor which is a downstream target of gcm and repo. Directly or indirectly activates the transcription of locos and pros, which are essential for the development of some glial cells. Plays an essential role in defining the cell shape and migration characteristics of longitudinal glia that enable them to establish a normal axon scaffold.</text>
</comment>
<comment type="subcellular location">
    <subcellularLocation>
        <location evidence="1 9">Nucleus</location>
    </subcellularLocation>
</comment>
<comment type="alternative products">
    <event type="alternative splicing"/>
    <isoform>
        <id>Q24573-1</id>
        <name evidence="10">B</name>
        <sequence type="displayed"/>
    </isoform>
    <isoform>
        <id>Q24573-2</id>
        <name evidence="10">A</name>
        <sequence type="described" ref="VSP_050694"/>
    </isoform>
</comment>
<comment type="tissue specificity">
    <text evidence="6 9">Present in the pharyngeal muscles, hindgut epithelium, amnioserosa, ring gland, midgut-hindgut junction, posterior region of each brain lobe, longitudinal glial cells of the CNS and the salivary gland duct of germ-band retracted embryos.</text>
</comment>
<comment type="developmental stage">
    <text evidence="7 9">Expressed maternally throughout the embryo at the syncytial cleavage divisions and zygotically at the termini and in a broad central band during cellularization. At germ band extension, the protein is found in the mesoderm. Expressed in a subset of neurons from larva and pupa.</text>
</comment>
<comment type="disruption phenotype">
    <text evidence="7">Flies show axon guidance abnormalities in mushroom bodies and pathfinding errors by photoreceptor and subesophageal neurons. Female flies with retn defects are strikingly resistant to male courtship and show male-like courtship of females and males, especially as they age.</text>
</comment>
<comment type="sequence caution" evidence="12">
    <conflict type="erroneous initiation">
        <sequence resource="EMBL-CDS" id="AAB05771"/>
    </conflict>
</comment>
<reference evidence="12" key="1">
    <citation type="journal article" date="1996" name="Mol. Cell. Biol.">
        <title>Characterization of the dead ringer gene identifies a novel, highly conserved family of sequence-specific DNA-binding proteins.</title>
        <authorList>
            <person name="Gregory S.L."/>
            <person name="Kortschak R.D."/>
            <person name="Kalionis B."/>
            <person name="Saint R."/>
        </authorList>
    </citation>
    <scope>NUCLEOTIDE SEQUENCE [MRNA] (ISOFORM A)</scope>
    <scope>SUBCELLULAR LOCATION</scope>
    <scope>DEVELOPMENTAL STAGE</scope>
    <scope>TISSUE SPECIFICITY</scope>
    <source>
        <tissue evidence="9">Embryo</tissue>
    </source>
</reference>
<reference evidence="12" key="2">
    <citation type="journal article" date="2000" name="Science">
        <title>The genome sequence of Drosophila melanogaster.</title>
        <authorList>
            <person name="Adams M.D."/>
            <person name="Celniker S.E."/>
            <person name="Holt R.A."/>
            <person name="Evans C.A."/>
            <person name="Gocayne J.D."/>
            <person name="Amanatides P.G."/>
            <person name="Scherer S.E."/>
            <person name="Li P.W."/>
            <person name="Hoskins R.A."/>
            <person name="Galle R.F."/>
            <person name="George R.A."/>
            <person name="Lewis S.E."/>
            <person name="Richards S."/>
            <person name="Ashburner M."/>
            <person name="Henderson S.N."/>
            <person name="Sutton G.G."/>
            <person name="Wortman J.R."/>
            <person name="Yandell M.D."/>
            <person name="Zhang Q."/>
            <person name="Chen L.X."/>
            <person name="Brandon R.C."/>
            <person name="Rogers Y.-H.C."/>
            <person name="Blazej R.G."/>
            <person name="Champe M."/>
            <person name="Pfeiffer B.D."/>
            <person name="Wan K.H."/>
            <person name="Doyle C."/>
            <person name="Baxter E.G."/>
            <person name="Helt G."/>
            <person name="Nelson C.R."/>
            <person name="Miklos G.L.G."/>
            <person name="Abril J.F."/>
            <person name="Agbayani A."/>
            <person name="An H.-J."/>
            <person name="Andrews-Pfannkoch C."/>
            <person name="Baldwin D."/>
            <person name="Ballew R.M."/>
            <person name="Basu A."/>
            <person name="Baxendale J."/>
            <person name="Bayraktaroglu L."/>
            <person name="Beasley E.M."/>
            <person name="Beeson K.Y."/>
            <person name="Benos P.V."/>
            <person name="Berman B.P."/>
            <person name="Bhandari D."/>
            <person name="Bolshakov S."/>
            <person name="Borkova D."/>
            <person name="Botchan M.R."/>
            <person name="Bouck J."/>
            <person name="Brokstein P."/>
            <person name="Brottier P."/>
            <person name="Burtis K.C."/>
            <person name="Busam D.A."/>
            <person name="Butler H."/>
            <person name="Cadieu E."/>
            <person name="Center A."/>
            <person name="Chandra I."/>
            <person name="Cherry J.M."/>
            <person name="Cawley S."/>
            <person name="Dahlke C."/>
            <person name="Davenport L.B."/>
            <person name="Davies P."/>
            <person name="de Pablos B."/>
            <person name="Delcher A."/>
            <person name="Deng Z."/>
            <person name="Mays A.D."/>
            <person name="Dew I."/>
            <person name="Dietz S.M."/>
            <person name="Dodson K."/>
            <person name="Doup L.E."/>
            <person name="Downes M."/>
            <person name="Dugan-Rocha S."/>
            <person name="Dunkov B.C."/>
            <person name="Dunn P."/>
            <person name="Durbin K.J."/>
            <person name="Evangelista C.C."/>
            <person name="Ferraz C."/>
            <person name="Ferriera S."/>
            <person name="Fleischmann W."/>
            <person name="Fosler C."/>
            <person name="Gabrielian A.E."/>
            <person name="Garg N.S."/>
            <person name="Gelbart W.M."/>
            <person name="Glasser K."/>
            <person name="Glodek A."/>
            <person name="Gong F."/>
            <person name="Gorrell J.H."/>
            <person name="Gu Z."/>
            <person name="Guan P."/>
            <person name="Harris M."/>
            <person name="Harris N.L."/>
            <person name="Harvey D.A."/>
            <person name="Heiman T.J."/>
            <person name="Hernandez J.R."/>
            <person name="Houck J."/>
            <person name="Hostin D."/>
            <person name="Houston K.A."/>
            <person name="Howland T.J."/>
            <person name="Wei M.-H."/>
            <person name="Ibegwam C."/>
            <person name="Jalali M."/>
            <person name="Kalush F."/>
            <person name="Karpen G.H."/>
            <person name="Ke Z."/>
            <person name="Kennison J.A."/>
            <person name="Ketchum K.A."/>
            <person name="Kimmel B.E."/>
            <person name="Kodira C.D."/>
            <person name="Kraft C.L."/>
            <person name="Kravitz S."/>
            <person name="Kulp D."/>
            <person name="Lai Z."/>
            <person name="Lasko P."/>
            <person name="Lei Y."/>
            <person name="Levitsky A.A."/>
            <person name="Li J.H."/>
            <person name="Li Z."/>
            <person name="Liang Y."/>
            <person name="Lin X."/>
            <person name="Liu X."/>
            <person name="Mattei B."/>
            <person name="McIntosh T.C."/>
            <person name="McLeod M.P."/>
            <person name="McPherson D."/>
            <person name="Merkulov G."/>
            <person name="Milshina N.V."/>
            <person name="Mobarry C."/>
            <person name="Morris J."/>
            <person name="Moshrefi A."/>
            <person name="Mount S.M."/>
            <person name="Moy M."/>
            <person name="Murphy B."/>
            <person name="Murphy L."/>
            <person name="Muzny D.M."/>
            <person name="Nelson D.L."/>
            <person name="Nelson D.R."/>
            <person name="Nelson K.A."/>
            <person name="Nixon K."/>
            <person name="Nusskern D.R."/>
            <person name="Pacleb J.M."/>
            <person name="Palazzolo M."/>
            <person name="Pittman G.S."/>
            <person name="Pan S."/>
            <person name="Pollard J."/>
            <person name="Puri V."/>
            <person name="Reese M.G."/>
            <person name="Reinert K."/>
            <person name="Remington K."/>
            <person name="Saunders R.D.C."/>
            <person name="Scheeler F."/>
            <person name="Shen H."/>
            <person name="Shue B.C."/>
            <person name="Siden-Kiamos I."/>
            <person name="Simpson M."/>
            <person name="Skupski M.P."/>
            <person name="Smith T.J."/>
            <person name="Spier E."/>
            <person name="Spradling A.C."/>
            <person name="Stapleton M."/>
            <person name="Strong R."/>
            <person name="Sun E."/>
            <person name="Svirskas R."/>
            <person name="Tector C."/>
            <person name="Turner R."/>
            <person name="Venter E."/>
            <person name="Wang A.H."/>
            <person name="Wang X."/>
            <person name="Wang Z.-Y."/>
            <person name="Wassarman D.A."/>
            <person name="Weinstock G.M."/>
            <person name="Weissenbach J."/>
            <person name="Williams S.M."/>
            <person name="Woodage T."/>
            <person name="Worley K.C."/>
            <person name="Wu D."/>
            <person name="Yang S."/>
            <person name="Yao Q.A."/>
            <person name="Ye J."/>
            <person name="Yeh R.-F."/>
            <person name="Zaveri J.S."/>
            <person name="Zhan M."/>
            <person name="Zhang G."/>
            <person name="Zhao Q."/>
            <person name="Zheng L."/>
            <person name="Zheng X.H."/>
            <person name="Zhong F.N."/>
            <person name="Zhong W."/>
            <person name="Zhou X."/>
            <person name="Zhu S.C."/>
            <person name="Zhu X."/>
            <person name="Smith H.O."/>
            <person name="Gibbs R.A."/>
            <person name="Myers E.W."/>
            <person name="Rubin G.M."/>
            <person name="Venter J.C."/>
        </authorList>
    </citation>
    <scope>NUCLEOTIDE SEQUENCE [LARGE SCALE GENOMIC DNA]</scope>
    <source>
        <strain evidence="4">Berkeley</strain>
    </source>
</reference>
<reference evidence="12" key="3">
    <citation type="journal article" date="2002" name="Genome Biol.">
        <title>Annotation of the Drosophila melanogaster euchromatic genome: a systematic review.</title>
        <authorList>
            <person name="Misra S."/>
            <person name="Crosby M.A."/>
            <person name="Mungall C.J."/>
            <person name="Matthews B.B."/>
            <person name="Campbell K.S."/>
            <person name="Hradecky P."/>
            <person name="Huang Y."/>
            <person name="Kaminker J.S."/>
            <person name="Millburn G.H."/>
            <person name="Prochnik S.E."/>
            <person name="Smith C.D."/>
            <person name="Tupy J.L."/>
            <person name="Whitfield E.J."/>
            <person name="Bayraktaroglu L."/>
            <person name="Berman B.P."/>
            <person name="Bettencourt B.R."/>
            <person name="Celniker S.E."/>
            <person name="de Grey A.D.N.J."/>
            <person name="Drysdale R.A."/>
            <person name="Harris N.L."/>
            <person name="Richter J."/>
            <person name="Russo S."/>
            <person name="Schroeder A.J."/>
            <person name="Shu S.Q."/>
            <person name="Stapleton M."/>
            <person name="Yamada C."/>
            <person name="Ashburner M."/>
            <person name="Gelbart W.M."/>
            <person name="Rubin G.M."/>
            <person name="Lewis S.E."/>
        </authorList>
    </citation>
    <scope>GENOME REANNOTATION</scope>
    <scope>ALTERNATIVE SPLICING</scope>
    <source>
        <strain>Berkeley</strain>
    </source>
</reference>
<reference evidence="12" key="4">
    <citation type="journal article" date="2002" name="Genome Biol.">
        <title>A Drosophila full-length cDNA resource.</title>
        <authorList>
            <person name="Stapleton M."/>
            <person name="Carlson J.W."/>
            <person name="Brokstein P."/>
            <person name="Yu C."/>
            <person name="Champe M."/>
            <person name="George R.A."/>
            <person name="Guarin H."/>
            <person name="Kronmiller B."/>
            <person name="Pacleb J.M."/>
            <person name="Park S."/>
            <person name="Wan K.H."/>
            <person name="Rubin G.M."/>
            <person name="Celniker S.E."/>
        </authorList>
    </citation>
    <scope>NUCLEOTIDE SEQUENCE [LARGE SCALE MRNA] (ISOFORM B)</scope>
    <source>
        <strain evidence="5">Berkeley</strain>
        <tissue evidence="5">Embryo</tissue>
    </source>
</reference>
<reference evidence="12" key="5">
    <citation type="journal article" date="2003" name="Development">
        <title>The dead ringer/retained transcriptional regulatory gene is required for positioning of the longitudinal glia in the Drosophila embryonic CNS.</title>
        <authorList>
            <person name="Shandala T."/>
            <person name="Takizawa K."/>
            <person name="Saint R."/>
        </authorList>
    </citation>
    <scope>FUNCTION</scope>
    <scope>TISSUE SPECIFICITY</scope>
</reference>
<reference key="6">
    <citation type="journal article" date="2005" name="Development">
        <title>Drosophila retained/dead ringer is necessary for neuronal pathfinding, female receptivity and repression of fruitless independent male courtship behaviors.</title>
        <authorList>
            <person name="Ditch L.M."/>
            <person name="Shirangi T."/>
            <person name="Pitman J.L."/>
            <person name="Latham K.L."/>
            <person name="Finley K.D."/>
            <person name="Edeen P.T."/>
            <person name="Taylor B.J."/>
            <person name="McKeown M."/>
        </authorList>
    </citation>
    <scope>FUNCTION</scope>
    <scope>DEVELOPMENTAL STAGE</scope>
    <scope>DISRUPTION PHENOTYPE</scope>
</reference>
<reference key="7">
    <citation type="journal article" date="2008" name="J. Proteome Res.">
        <title>Phosphoproteome analysis of Drosophila melanogaster embryos.</title>
        <authorList>
            <person name="Zhai B."/>
            <person name="Villen J."/>
            <person name="Beausoleil S.A."/>
            <person name="Mintseris J."/>
            <person name="Gygi S.P."/>
        </authorList>
    </citation>
    <scope>PHOSPHORYLATION [LARGE SCALE ANALYSIS] AT SER-30; THR-35; SER-44; SER-592; SER-594 AND SER-720</scope>
    <scope>IDENTIFICATION BY MASS SPECTROMETRY</scope>
    <source>
        <tissue>Embryo</tissue>
    </source>
</reference>
<reference evidence="12" key="8">
    <citation type="journal article" date="2002" name="EMBO J.">
        <title>The structure of the Dead ringer-DNA complex reveals how AT-rich interaction domains (ARIDs) recognize DNA.</title>
        <authorList>
            <person name="Iwahara J."/>
            <person name="Iwahara M."/>
            <person name="Daughdrill G.W."/>
            <person name="Ford J."/>
            <person name="Clubb R.T."/>
        </authorList>
    </citation>
    <scope>STRUCTURE BY NMR OF 274-410</scope>
    <scope>DNA-BINDING</scope>
</reference>
<dbReference type="EMBL" id="U62542">
    <property type="protein sequence ID" value="AAB05771.1"/>
    <property type="status" value="ALT_INIT"/>
    <property type="molecule type" value="mRNA"/>
</dbReference>
<dbReference type="EMBL" id="AE013599">
    <property type="protein sequence ID" value="AAO41347.1"/>
    <property type="molecule type" value="Genomic_DNA"/>
</dbReference>
<dbReference type="EMBL" id="AE013599">
    <property type="protein sequence ID" value="AAF47037.3"/>
    <property type="molecule type" value="Genomic_DNA"/>
</dbReference>
<dbReference type="EMBL" id="AY118955">
    <property type="protein sequence ID" value="AAM50815.1"/>
    <property type="molecule type" value="mRNA"/>
</dbReference>
<dbReference type="PIR" id="JC6093">
    <property type="entry name" value="JC6093"/>
</dbReference>
<dbReference type="RefSeq" id="NP_476864.2">
    <molecule id="Q24573-2"/>
    <property type="nucleotide sequence ID" value="NM_057516.4"/>
</dbReference>
<dbReference type="RefSeq" id="NP_788434.1">
    <molecule id="Q24573-1"/>
    <property type="nucleotide sequence ID" value="NM_176254.2"/>
</dbReference>
<dbReference type="PDB" id="1C20">
    <property type="method" value="NMR"/>
    <property type="chains" value="A=274-401"/>
</dbReference>
<dbReference type="PDB" id="1KQQ">
    <property type="method" value="NMR"/>
    <property type="chains" value="A=274-410"/>
</dbReference>
<dbReference type="PDBsum" id="1C20"/>
<dbReference type="PDBsum" id="1KQQ"/>
<dbReference type="BMRB" id="Q24573"/>
<dbReference type="SMR" id="Q24573"/>
<dbReference type="BioGRID" id="70031">
    <property type="interactions" value="15"/>
</dbReference>
<dbReference type="FunCoup" id="Q24573">
    <property type="interactions" value="490"/>
</dbReference>
<dbReference type="IntAct" id="Q24573">
    <property type="interactions" value="15"/>
</dbReference>
<dbReference type="STRING" id="7227.FBpp0071982"/>
<dbReference type="GlyGen" id="Q24573">
    <property type="glycosylation" value="1 site"/>
</dbReference>
<dbReference type="iPTMnet" id="Q24573"/>
<dbReference type="PaxDb" id="7227-FBpp0071982"/>
<dbReference type="DNASU" id="45976"/>
<dbReference type="EnsemblMetazoa" id="FBtr0072072">
    <molecule id="Q24573-2"/>
    <property type="protein sequence ID" value="FBpp0071981"/>
    <property type="gene ID" value="FBgn0004795"/>
</dbReference>
<dbReference type="EnsemblMetazoa" id="FBtr0072073">
    <molecule id="Q24573-1"/>
    <property type="protein sequence ID" value="FBpp0071982"/>
    <property type="gene ID" value="FBgn0004795"/>
</dbReference>
<dbReference type="GeneID" id="45976"/>
<dbReference type="KEGG" id="dme:Dmel_CG5403"/>
<dbReference type="AGR" id="FB:FBgn0004795"/>
<dbReference type="CTD" id="56729"/>
<dbReference type="FlyBase" id="FBgn0004795">
    <property type="gene designation" value="retn"/>
</dbReference>
<dbReference type="VEuPathDB" id="VectorBase:FBgn0004795"/>
<dbReference type="eggNOG" id="KOG2744">
    <property type="taxonomic scope" value="Eukaryota"/>
</dbReference>
<dbReference type="GeneTree" id="ENSGT00940000169348"/>
<dbReference type="InParanoid" id="Q24573"/>
<dbReference type="OMA" id="ADQDMEG"/>
<dbReference type="OrthoDB" id="10044343at2759"/>
<dbReference type="PhylomeDB" id="Q24573"/>
<dbReference type="SignaLink" id="Q24573"/>
<dbReference type="BioGRID-ORCS" id="45976">
    <property type="hits" value="0 hits in 3 CRISPR screens"/>
</dbReference>
<dbReference type="EvolutionaryTrace" id="Q24573"/>
<dbReference type="GenomeRNAi" id="45976"/>
<dbReference type="PRO" id="PR:Q24573"/>
<dbReference type="Proteomes" id="UP000000803">
    <property type="component" value="Chromosome 2R"/>
</dbReference>
<dbReference type="Bgee" id="FBgn0004795">
    <property type="expression patterns" value="Expressed in outer photoreceptor cell (Drosophila) in insect head and 139 other cell types or tissues"/>
</dbReference>
<dbReference type="ExpressionAtlas" id="Q24573">
    <property type="expression patterns" value="baseline and differential"/>
</dbReference>
<dbReference type="GO" id="GO:0005634">
    <property type="term" value="C:nucleus"/>
    <property type="evidence" value="ECO:0000314"/>
    <property type="project" value="UniProtKB"/>
</dbReference>
<dbReference type="GO" id="GO:0003677">
    <property type="term" value="F:DNA binding"/>
    <property type="evidence" value="ECO:0000314"/>
    <property type="project" value="UniProtKB"/>
</dbReference>
<dbReference type="GO" id="GO:0140297">
    <property type="term" value="F:DNA-binding transcription factor binding"/>
    <property type="evidence" value="ECO:0000353"/>
    <property type="project" value="FlyBase"/>
</dbReference>
<dbReference type="GO" id="GO:0000976">
    <property type="term" value="F:transcription cis-regulatory region binding"/>
    <property type="evidence" value="ECO:0000314"/>
    <property type="project" value="FlyBase"/>
</dbReference>
<dbReference type="GO" id="GO:0009952">
    <property type="term" value="P:anterior/posterior pattern specification"/>
    <property type="evidence" value="ECO:0000315"/>
    <property type="project" value="FlyBase"/>
</dbReference>
<dbReference type="GO" id="GO:0007411">
    <property type="term" value="P:axon guidance"/>
    <property type="evidence" value="ECO:0000315"/>
    <property type="project" value="FlyBase"/>
</dbReference>
<dbReference type="GO" id="GO:0048813">
    <property type="term" value="P:dendrite morphogenesis"/>
    <property type="evidence" value="ECO:0000315"/>
    <property type="project" value="FlyBase"/>
</dbReference>
<dbReference type="GO" id="GO:0009880">
    <property type="term" value="P:embryonic pattern specification"/>
    <property type="evidence" value="ECO:0000315"/>
    <property type="project" value="FlyBase"/>
</dbReference>
<dbReference type="GO" id="GO:0042063">
    <property type="term" value="P:gliogenesis"/>
    <property type="evidence" value="ECO:0000315"/>
    <property type="project" value="UniProtKB"/>
</dbReference>
<dbReference type="GO" id="GO:0008049">
    <property type="term" value="P:male courtship behavior"/>
    <property type="evidence" value="ECO:0000315"/>
    <property type="project" value="FlyBase"/>
</dbReference>
<dbReference type="GO" id="GO:0007517">
    <property type="term" value="P:muscle organ development"/>
    <property type="evidence" value="ECO:0000315"/>
    <property type="project" value="FlyBase"/>
</dbReference>
<dbReference type="GO" id="GO:0000122">
    <property type="term" value="P:negative regulation of transcription by RNA polymerase II"/>
    <property type="evidence" value="ECO:0000315"/>
    <property type="project" value="FlyBase"/>
</dbReference>
<dbReference type="GO" id="GO:0048477">
    <property type="term" value="P:oogenesis"/>
    <property type="evidence" value="ECO:0007001"/>
    <property type="project" value="FlyBase"/>
</dbReference>
<dbReference type="GO" id="GO:0045893">
    <property type="term" value="P:positive regulation of DNA-templated transcription"/>
    <property type="evidence" value="ECO:0000315"/>
    <property type="project" value="UniProtKB"/>
</dbReference>
<dbReference type="GO" id="GO:0045924">
    <property type="term" value="P:regulation of female receptivity"/>
    <property type="evidence" value="ECO:0000315"/>
    <property type="project" value="FlyBase"/>
</dbReference>
<dbReference type="GO" id="GO:0006357">
    <property type="term" value="P:regulation of transcription by RNA polymerase II"/>
    <property type="evidence" value="ECO:0000318"/>
    <property type="project" value="GO_Central"/>
</dbReference>
<dbReference type="GO" id="GO:0007431">
    <property type="term" value="P:salivary gland development"/>
    <property type="evidence" value="ECO:0000303"/>
    <property type="project" value="FlyBase"/>
</dbReference>
<dbReference type="CDD" id="cd16881">
    <property type="entry name" value="ARID_Dri-like"/>
    <property type="match status" value="1"/>
</dbReference>
<dbReference type="FunFam" id="1.10.150.60:FF:000007">
    <property type="entry name" value="AT-rich interactive domain-containing protein 3C"/>
    <property type="match status" value="1"/>
</dbReference>
<dbReference type="Gene3D" id="1.10.150.60">
    <property type="entry name" value="ARID DNA-binding domain"/>
    <property type="match status" value="1"/>
</dbReference>
<dbReference type="InterPro" id="IPR045147">
    <property type="entry name" value="ARI3A/B/C"/>
</dbReference>
<dbReference type="InterPro" id="IPR001606">
    <property type="entry name" value="ARID_dom"/>
</dbReference>
<dbReference type="InterPro" id="IPR036431">
    <property type="entry name" value="ARID_dom_sf"/>
</dbReference>
<dbReference type="InterPro" id="IPR023334">
    <property type="entry name" value="REKLES_domain"/>
</dbReference>
<dbReference type="PANTHER" id="PTHR15348">
    <property type="entry name" value="AT-RICH INTERACTIVE DOMAIN-CONTAINING PROTEIN ARID DOMAIN- CONTAINING PROTEIN DEAD RINGER PROTEIN B-CELL REGULATOR OF IGH TRANSCRIPTION BRIGHT"/>
    <property type="match status" value="1"/>
</dbReference>
<dbReference type="PANTHER" id="PTHR15348:SF0">
    <property type="entry name" value="PROTEIN DEAD RINGER"/>
    <property type="match status" value="1"/>
</dbReference>
<dbReference type="Pfam" id="PF01388">
    <property type="entry name" value="ARID"/>
    <property type="match status" value="1"/>
</dbReference>
<dbReference type="SMART" id="SM01014">
    <property type="entry name" value="ARID"/>
    <property type="match status" value="1"/>
</dbReference>
<dbReference type="SMART" id="SM00501">
    <property type="entry name" value="BRIGHT"/>
    <property type="match status" value="1"/>
</dbReference>
<dbReference type="SUPFAM" id="SSF46774">
    <property type="entry name" value="ARID-like"/>
    <property type="match status" value="1"/>
</dbReference>
<dbReference type="PROSITE" id="PS51011">
    <property type="entry name" value="ARID"/>
    <property type="match status" value="1"/>
</dbReference>
<dbReference type="PROSITE" id="PS51486">
    <property type="entry name" value="REKLES"/>
    <property type="match status" value="1"/>
</dbReference>
<protein>
    <recommendedName>
        <fullName>Protein dead ringer</fullName>
    </recommendedName>
    <alternativeName>
        <fullName>Protein retained</fullName>
    </alternativeName>
</protein>
<keyword id="KW-0002">3D-structure</keyword>
<keyword id="KW-0010">Activator</keyword>
<keyword id="KW-0025">Alternative splicing</keyword>
<keyword id="KW-0217">Developmental protein</keyword>
<keyword id="KW-0238">DNA-binding</keyword>
<keyword id="KW-0539">Nucleus</keyword>
<keyword id="KW-0597">Phosphoprotein</keyword>
<keyword id="KW-1185">Reference proteome</keyword>
<keyword id="KW-0804">Transcription</keyword>
<keyword id="KW-0805">Transcription regulation</keyword>
<proteinExistence type="evidence at protein level"/>
<organism evidence="13">
    <name type="scientific">Drosophila melanogaster</name>
    <name type="common">Fruit fly</name>
    <dbReference type="NCBI Taxonomy" id="7227"/>
    <lineage>
        <taxon>Eukaryota</taxon>
        <taxon>Metazoa</taxon>
        <taxon>Ecdysozoa</taxon>
        <taxon>Arthropoda</taxon>
        <taxon>Hexapoda</taxon>
        <taxon>Insecta</taxon>
        <taxon>Pterygota</taxon>
        <taxon>Neoptera</taxon>
        <taxon>Endopterygota</taxon>
        <taxon>Diptera</taxon>
        <taxon>Brachycera</taxon>
        <taxon>Muscomorpha</taxon>
        <taxon>Ephydroidea</taxon>
        <taxon>Drosophilidae</taxon>
        <taxon>Drosophila</taxon>
        <taxon>Sophophora</taxon>
    </lineage>
</organism>